<feature type="signal peptide" evidence="3">
    <location>
        <begin position="1"/>
        <end position="21"/>
    </location>
</feature>
<feature type="chain" id="PRO_5004591130" description="Alpha-L-rhamnosidase">
    <location>
        <begin position="22"/>
        <end position="952"/>
    </location>
</feature>
<feature type="active site" description="Proton donor" evidence="1">
    <location>
        <position position="525"/>
    </location>
</feature>
<feature type="active site" description="Proton acceptor" evidence="1">
    <location>
        <position position="809"/>
    </location>
</feature>
<feature type="binding site" evidence="1">
    <location>
        <position position="520"/>
    </location>
    <ligand>
        <name>alpha-L-rhamnose</name>
        <dbReference type="ChEBI" id="CHEBI:27907"/>
    </ligand>
</feature>
<feature type="binding site" evidence="1">
    <location>
        <begin position="524"/>
        <end position="525"/>
    </location>
    <ligand>
        <name>alpha-L-rhamnose</name>
        <dbReference type="ChEBI" id="CHEBI:27907"/>
    </ligand>
</feature>
<feature type="binding site" evidence="1">
    <location>
        <position position="532"/>
    </location>
    <ligand>
        <name>alpha-L-rhamnose</name>
        <dbReference type="ChEBI" id="CHEBI:27907"/>
    </ligand>
</feature>
<feature type="binding site" evidence="1">
    <location>
        <position position="594"/>
    </location>
    <ligand>
        <name>alpha-L-rhamnose</name>
        <dbReference type="ChEBI" id="CHEBI:27907"/>
    </ligand>
</feature>
<feature type="binding site" evidence="1">
    <location>
        <position position="826"/>
    </location>
    <ligand>
        <name>alpha-L-rhamnose</name>
        <dbReference type="ChEBI" id="CHEBI:27907"/>
    </ligand>
</feature>
<name>PLH28_FORAG</name>
<organism>
    <name type="scientific">Formosa agariphila (strain DSM 15362 / KCTC 12365 / LMG 23005 / KMM 3901 / M-2Alg 35-1)</name>
    <dbReference type="NCBI Taxonomy" id="1347342"/>
    <lineage>
        <taxon>Bacteria</taxon>
        <taxon>Pseudomonadati</taxon>
        <taxon>Bacteroidota</taxon>
        <taxon>Flavobacteriia</taxon>
        <taxon>Flavobacteriales</taxon>
        <taxon>Flavobacteriaceae</taxon>
        <taxon>Formosa</taxon>
    </lineage>
</organism>
<proteinExistence type="evidence at transcript level"/>
<reference key="1">
    <citation type="journal article" date="2013" name="Appl. Environ. Microbiol.">
        <title>The genome of the alga-associated marine flavobacterium Formosa agariphila KMM 3901T reveals a broad potential for degradation of algal polysaccharides.</title>
        <authorList>
            <person name="Mann A.J."/>
            <person name="Hahnke R.L."/>
            <person name="Huang S."/>
            <person name="Werner J."/>
            <person name="Xing P."/>
            <person name="Barbeyron T."/>
            <person name="Huettel B."/>
            <person name="Stueber K."/>
            <person name="Reinhardt R."/>
            <person name="Harder J."/>
            <person name="Gloeckner F.O."/>
            <person name="Amann R.I."/>
            <person name="Teeling H."/>
        </authorList>
    </citation>
    <scope>NUCLEOTIDE SEQUENCE [LARGE SCALE GENOMIC DNA]</scope>
    <source>
        <strain>DSM 15362 / KCTC 12365 / LMG 23005 / KMM 3901 / M-2Alg 35-1</strain>
    </source>
</reference>
<reference key="2">
    <citation type="journal article" date="2019" name="Nat. Chem. Biol.">
        <title>A marine bacterial enzymatic cascade degrades the algal polysaccharide ulvan.</title>
        <authorList>
            <person name="Reisky L."/>
            <person name="Prechoux A."/>
            <person name="Zuehlke M.K."/>
            <person name="Baeumgen M."/>
            <person name="Robb C.S."/>
            <person name="Gerlach N."/>
            <person name="Roret T."/>
            <person name="Stanetty C."/>
            <person name="Larocque R."/>
            <person name="Michel G."/>
            <person name="Song T."/>
            <person name="Markert S."/>
            <person name="Unfried F."/>
            <person name="Mihovilovic M.D."/>
            <person name="Trautwein-Schult A."/>
            <person name="Becher D."/>
            <person name="Schweder T."/>
            <person name="Bornscheuer U.T."/>
            <person name="Hehemann J.H."/>
        </authorList>
    </citation>
    <scope>FUNCTION</scope>
    <scope>SUBCELLULAR LOCATION</scope>
    <scope>INDUCTION</scope>
</reference>
<keyword id="KW-1003">Cell membrane</keyword>
<keyword id="KW-0326">Glycosidase</keyword>
<keyword id="KW-0378">Hydrolase</keyword>
<keyword id="KW-0449">Lipoprotein</keyword>
<keyword id="KW-0472">Membrane</keyword>
<keyword id="KW-1185">Reference proteome</keyword>
<keyword id="KW-0732">Signal</keyword>
<accession>T2KPL4</accession>
<comment type="function">
    <text evidence="8">Alpha-L-rhamnosidase that may be involved in ulvan degradation (Probable). Ulvan is the main polysaccharide component of the Ulvales (green seaweed) cell wall. It is composed of disaccharide building blocks comprising 3-sulfated rhamnose (Rha3S) linked to D-glucuronic acid (GlcA), L-iduronic acid (IduA), or D-xylose (Xyl) (Probable).</text>
</comment>
<comment type="catalytic activity">
    <reaction evidence="2">
        <text>Hydrolysis of terminal non-reducing alpha-L-rhamnose residues in alpha-L-rhamnosides.</text>
        <dbReference type="EC" id="3.2.1.40"/>
    </reaction>
</comment>
<comment type="subcellular location">
    <subcellularLocation>
        <location evidence="5">Cell membrane</location>
        <topology evidence="4">Lipid-anchor</topology>
        <orientation evidence="8">Periplasmic side</orientation>
    </subcellularLocation>
</comment>
<comment type="induction">
    <text evidence="5">By ulvan and rhamnose.</text>
</comment>
<comment type="similarity">
    <text evidence="7">Belongs to the glycosyl hydrolase 78 family.</text>
</comment>
<protein>
    <recommendedName>
        <fullName evidence="6">Alpha-L-rhamnosidase</fullName>
        <ecNumber evidence="2">3.2.1.40</ecNumber>
    </recommendedName>
    <alternativeName>
        <fullName evidence="7">Glycosyl hydrolase 78 family protein P28</fullName>
        <shortName evidence="6">P28_GH78</shortName>
    </alternativeName>
    <alternativeName>
        <fullName evidence="6">Polysaccharide utilization locus H protein P28</fullName>
        <shortName>PUL H protein P28</shortName>
    </alternativeName>
</protein>
<gene>
    <name type="ORF">BN863_22170</name>
</gene>
<sequence>MKYNKLLFSLLLLAVFCFSCKEEQKLQTSLDFDKVLLNAKSNPIAIESESPLFSWIIKAEGFGKSQSAYHILVASSLDKLDETHADVWNSNKVESSKSTFVKYEGKELKAATRYYWKVKVWDKSNQESNWSEPQYFQMGLLDESNWGEAKWITLTNDTRTSEYRFREYKTGRMEQPIQVDGFAASYFRNKINLNKEVDNAQVYICGLGYYEFFLNGEKVGDHVLDPAPSNYDKQAYYVNYDITEQLNSGENALGIILGNGFYGQNISWKNDPESDRDLAYGPPTVRVLLKLKYKDGTESEFFSDETWKESTGPIVFNNIYGGDTYDARFELGDWTSTNYDDSSWGFAKETAPEIKNISAQQIPAIKKLQDYEPQNVFKGSDGEWIVDFGQNIAGWVKLNVSEKEGQLIEVITTEALLTNGRDIFPGSTGGGANGMAQIYQYICKGDGQESWEPKFSYHGFRYAKIKGVSTKPDADMIKAVLVATDIQETGSFECSDDLFNKMHNISKWTIVDNVHGIPEDCPHREKCGWLGDAHAFCEYALYNYDMYDFYKKYMEDIRTQMLPTKGHNNPELKFQVPTMIAPGKRTSSYAKIDWGVATMYLPWYNYLYYGDDAIVNEYYPEMKDLTNFYLNFKGENGIMQDGMGDWCPPRWDRRTNPEAMECDPIISANAYFYDVLGIMETFAKMNNDGAFQSEMKAEKEALKDAFNKAFLVEIPNTDFKWYQSQTATVQALQFGMVPEEEIENVVNGLEYDIVEVKGGHHSTGIHGNRYIYTVLSKYGKADLAYRILTTPDFPSQTYIMNSGFTTWPERQFEWETMEGPTNSLNHPMHSGFSAYFFESLGGIKSSTKEAGYKQFIVNPEFPSQITQTKVSVPTPYGDIKNDWSFEEGKLSMTLEIPFNTEANLVLNQAELESLIINGKTFQNLQKNTKSVTLQGSNVILGSGKYKILYNKR</sequence>
<evidence type="ECO:0000250" key="1">
    <source>
        <dbReference type="UniProtKB" id="Q82PP4"/>
    </source>
</evidence>
<evidence type="ECO:0000250" key="2">
    <source>
        <dbReference type="UniProtKB" id="T2KNB2"/>
    </source>
</evidence>
<evidence type="ECO:0000255" key="3"/>
<evidence type="ECO:0000255" key="4">
    <source>
        <dbReference type="PROSITE-ProRule" id="PRU00303"/>
    </source>
</evidence>
<evidence type="ECO:0000269" key="5">
    <source>
    </source>
</evidence>
<evidence type="ECO:0000303" key="6">
    <source>
    </source>
</evidence>
<evidence type="ECO:0000305" key="7"/>
<evidence type="ECO:0000305" key="8">
    <source>
    </source>
</evidence>
<dbReference type="EC" id="3.2.1.40" evidence="2"/>
<dbReference type="EMBL" id="HG315671">
    <property type="protein sequence ID" value="CDF79929.1"/>
    <property type="molecule type" value="Genomic_DNA"/>
</dbReference>
<dbReference type="RefSeq" id="WP_038530525.1">
    <property type="nucleotide sequence ID" value="NZ_HG315671.1"/>
</dbReference>
<dbReference type="SMR" id="T2KPL4"/>
<dbReference type="STRING" id="1347342.BN863_22170"/>
<dbReference type="PATRIC" id="fig|1347342.6.peg.2224"/>
<dbReference type="eggNOG" id="COG3408">
    <property type="taxonomic scope" value="Bacteria"/>
</dbReference>
<dbReference type="HOGENOM" id="CLU_002926_1_1_10"/>
<dbReference type="OrthoDB" id="9815108at2"/>
<dbReference type="Proteomes" id="UP000016160">
    <property type="component" value="Chromosome"/>
</dbReference>
<dbReference type="GO" id="GO:0005886">
    <property type="term" value="C:plasma membrane"/>
    <property type="evidence" value="ECO:0007669"/>
    <property type="project" value="UniProtKB-SubCell"/>
</dbReference>
<dbReference type="GO" id="GO:0030596">
    <property type="term" value="F:alpha-L-rhamnosidase activity"/>
    <property type="evidence" value="ECO:0007669"/>
    <property type="project" value="UniProtKB-EC"/>
</dbReference>
<dbReference type="GO" id="GO:0005975">
    <property type="term" value="P:carbohydrate metabolic process"/>
    <property type="evidence" value="ECO:0007669"/>
    <property type="project" value="InterPro"/>
</dbReference>
<dbReference type="Gene3D" id="1.50.10.10">
    <property type="match status" value="1"/>
</dbReference>
<dbReference type="Gene3D" id="2.60.120.260">
    <property type="entry name" value="Galactose-binding domain-like"/>
    <property type="match status" value="2"/>
</dbReference>
<dbReference type="Gene3D" id="2.60.40.10">
    <property type="entry name" value="Immunoglobulins"/>
    <property type="match status" value="1"/>
</dbReference>
<dbReference type="Gene3D" id="2.60.420.10">
    <property type="entry name" value="Maltose phosphorylase, domain 3"/>
    <property type="match status" value="1"/>
</dbReference>
<dbReference type="InterPro" id="IPR008928">
    <property type="entry name" value="6-hairpin_glycosidase_sf"/>
</dbReference>
<dbReference type="InterPro" id="IPR012341">
    <property type="entry name" value="6hp_glycosidase-like_sf"/>
</dbReference>
<dbReference type="InterPro" id="IPR016007">
    <property type="entry name" value="Alpha_rhamnosid"/>
</dbReference>
<dbReference type="InterPro" id="IPR035396">
    <property type="entry name" value="Bac_rhamnosid6H"/>
</dbReference>
<dbReference type="InterPro" id="IPR035398">
    <property type="entry name" value="Bac_rhamnosid_C"/>
</dbReference>
<dbReference type="InterPro" id="IPR013737">
    <property type="entry name" value="Bac_rhamnosid_N"/>
</dbReference>
<dbReference type="InterPro" id="IPR013783">
    <property type="entry name" value="Ig-like_fold"/>
</dbReference>
<dbReference type="InterPro" id="IPR008902">
    <property type="entry name" value="Rhamnosid_concanavalin"/>
</dbReference>
<dbReference type="InterPro" id="IPR054970">
    <property type="entry name" value="Rhamnosidase_Flavobac"/>
</dbReference>
<dbReference type="NCBIfam" id="NF041572">
    <property type="entry name" value="rhamnosid_Flavobac"/>
    <property type="match status" value="1"/>
</dbReference>
<dbReference type="PANTHER" id="PTHR33307">
    <property type="entry name" value="ALPHA-RHAMNOSIDASE (EUROFUNG)"/>
    <property type="match status" value="1"/>
</dbReference>
<dbReference type="PANTHER" id="PTHR33307:SF6">
    <property type="entry name" value="ALPHA-RHAMNOSIDASE (EUROFUNG)-RELATED"/>
    <property type="match status" value="1"/>
</dbReference>
<dbReference type="Pfam" id="PF05592">
    <property type="entry name" value="Bac_rhamnosid"/>
    <property type="match status" value="1"/>
</dbReference>
<dbReference type="Pfam" id="PF17389">
    <property type="entry name" value="Bac_rhamnosid6H"/>
    <property type="match status" value="1"/>
</dbReference>
<dbReference type="Pfam" id="PF17390">
    <property type="entry name" value="Bac_rhamnosid_C"/>
    <property type="match status" value="1"/>
</dbReference>
<dbReference type="Pfam" id="PF08531">
    <property type="entry name" value="Bac_rhamnosid_N"/>
    <property type="match status" value="1"/>
</dbReference>
<dbReference type="PIRSF" id="PIRSF010631">
    <property type="entry name" value="A-rhamnsds"/>
    <property type="match status" value="1"/>
</dbReference>
<dbReference type="SUPFAM" id="SSF48208">
    <property type="entry name" value="Six-hairpin glycosidases"/>
    <property type="match status" value="1"/>
</dbReference>